<feature type="signal peptide" evidence="2">
    <location>
        <begin position="1"/>
        <end position="21"/>
    </location>
</feature>
<feature type="chain" id="PRO_0000313891" description="T-cell surface protein tactile">
    <location>
        <begin position="22"/>
        <end position="602"/>
    </location>
</feature>
<feature type="topological domain" description="Extracellular" evidence="2">
    <location>
        <begin position="22"/>
        <end position="536"/>
    </location>
</feature>
<feature type="transmembrane region" description="Helical" evidence="2">
    <location>
        <begin position="537"/>
        <end position="557"/>
    </location>
</feature>
<feature type="topological domain" description="Cytoplasmic" evidence="2">
    <location>
        <begin position="558"/>
        <end position="602"/>
    </location>
</feature>
<feature type="domain" description="Ig-like V-type 1">
    <location>
        <begin position="24"/>
        <end position="134"/>
    </location>
</feature>
<feature type="domain" description="Ig-like V-type 2">
    <location>
        <begin position="138"/>
        <end position="244"/>
    </location>
</feature>
<feature type="domain" description="Ig-like C2-type">
    <location>
        <begin position="250"/>
        <end position="355"/>
    </location>
</feature>
<feature type="region of interest" description="Disordered" evidence="4">
    <location>
        <begin position="402"/>
        <end position="478"/>
    </location>
</feature>
<feature type="compositionally biased region" description="Polar residues" evidence="4">
    <location>
        <begin position="409"/>
        <end position="433"/>
    </location>
</feature>
<feature type="compositionally biased region" description="Low complexity" evidence="4">
    <location>
        <begin position="434"/>
        <end position="448"/>
    </location>
</feature>
<feature type="glycosylation site" description="N-linked (GlcNAc...) asparagine" evidence="2">
    <location>
        <position position="42"/>
    </location>
</feature>
<feature type="glycosylation site" description="N-linked (GlcNAc...) asparagine" evidence="2">
    <location>
        <position position="100"/>
    </location>
</feature>
<feature type="glycosylation site" description="N-linked (GlcNAc...) asparagine" evidence="2">
    <location>
        <position position="107"/>
    </location>
</feature>
<feature type="glycosylation site" description="N-linked (GlcNAc...) asparagine" evidence="2">
    <location>
        <position position="145"/>
    </location>
</feature>
<feature type="glycosylation site" description="N-linked (GlcNAc...) asparagine" evidence="2">
    <location>
        <position position="153"/>
    </location>
</feature>
<feature type="glycosylation site" description="N-linked (GlcNAc...) asparagine" evidence="2">
    <location>
        <position position="163"/>
    </location>
</feature>
<feature type="glycosylation site" description="N-linked (GlcNAc...) asparagine" evidence="2">
    <location>
        <position position="195"/>
    </location>
</feature>
<feature type="glycosylation site" description="N-linked (GlcNAc...) asparagine" evidence="2">
    <location>
        <position position="196"/>
    </location>
</feature>
<feature type="glycosylation site" description="N-linked (GlcNAc...) asparagine" evidence="2">
    <location>
        <position position="258"/>
    </location>
</feature>
<feature type="glycosylation site" description="N-linked (GlcNAc...) asparagine" evidence="2">
    <location>
        <position position="281"/>
    </location>
</feature>
<feature type="glycosylation site" description="N-linked (GlcNAc...) asparagine" evidence="2">
    <location>
        <position position="306"/>
    </location>
</feature>
<feature type="glycosylation site" description="N-linked (GlcNAc...) asparagine" evidence="2">
    <location>
        <position position="330"/>
    </location>
</feature>
<feature type="glycosylation site" description="N-linked (GlcNAc...) asparagine" evidence="2">
    <location>
        <position position="348"/>
    </location>
</feature>
<feature type="glycosylation site" description="N-linked (GlcNAc...) asparagine" evidence="2">
    <location>
        <position position="415"/>
    </location>
</feature>
<feature type="glycosylation site" description="N-linked (GlcNAc...) asparagine" evidence="2">
    <location>
        <position position="436"/>
    </location>
</feature>
<feature type="glycosylation site" description="N-linked (GlcNAc...) asparagine" evidence="2">
    <location>
        <position position="514"/>
    </location>
</feature>
<feature type="disulfide bond" evidence="3">
    <location>
        <begin position="45"/>
        <end position="118"/>
    </location>
</feature>
<feature type="disulfide bond" evidence="3">
    <location>
        <begin position="160"/>
        <end position="228"/>
    </location>
</feature>
<feature type="disulfide bond" evidence="3">
    <location>
        <begin position="271"/>
        <end position="335"/>
    </location>
</feature>
<feature type="sequence conflict" description="In Ref. 2; BAC30620." evidence="5" ref="2">
    <original>V</original>
    <variation>A</variation>
    <location>
        <position position="33"/>
    </location>
</feature>
<feature type="sequence conflict" description="In Ref. 2; BAC30620." evidence="5" ref="2">
    <original>N</original>
    <variation>D</variation>
    <location>
        <position position="330"/>
    </location>
</feature>
<feature type="sequence conflict" description="In Ref. 1; AAK31788." evidence="5" ref="1">
    <original>ST</original>
    <variation>Y</variation>
    <location>
        <begin position="374"/>
        <end position="375"/>
    </location>
</feature>
<feature type="sequence conflict" description="In Ref. 3; AAH52865." evidence="5" ref="3">
    <original>G</original>
    <variation>A</variation>
    <location>
        <position position="535"/>
    </location>
</feature>
<feature type="strand" evidence="6">
    <location>
        <begin position="25"/>
        <end position="27"/>
    </location>
</feature>
<feature type="strand" evidence="6">
    <location>
        <begin position="31"/>
        <end position="35"/>
    </location>
</feature>
<feature type="strand" evidence="6">
    <location>
        <begin position="41"/>
        <end position="46"/>
    </location>
</feature>
<feature type="strand" evidence="6">
    <location>
        <begin position="52"/>
        <end position="72"/>
    </location>
</feature>
<feature type="turn" evidence="6">
    <location>
        <begin position="73"/>
        <end position="75"/>
    </location>
</feature>
<feature type="strand" evidence="6">
    <location>
        <begin position="76"/>
        <end position="79"/>
    </location>
</feature>
<feature type="helix" evidence="6">
    <location>
        <begin position="85"/>
        <end position="87"/>
    </location>
</feature>
<feature type="strand" evidence="6">
    <location>
        <begin position="89"/>
        <end position="93"/>
    </location>
</feature>
<feature type="strand" evidence="6">
    <location>
        <begin position="95"/>
        <end position="97"/>
    </location>
</feature>
<feature type="strand" evidence="6">
    <location>
        <begin position="99"/>
        <end position="105"/>
    </location>
</feature>
<feature type="helix" evidence="6">
    <location>
        <begin position="110"/>
        <end position="112"/>
    </location>
</feature>
<feature type="strand" evidence="6">
    <location>
        <begin position="114"/>
        <end position="123"/>
    </location>
</feature>
<feature type="strand" evidence="6">
    <location>
        <begin position="126"/>
        <end position="136"/>
    </location>
</feature>
<proteinExistence type="evidence at protein level"/>
<evidence type="ECO:0000250" key="1"/>
<evidence type="ECO:0000255" key="2"/>
<evidence type="ECO:0000255" key="3">
    <source>
        <dbReference type="PROSITE-ProRule" id="PRU00114"/>
    </source>
</evidence>
<evidence type="ECO:0000256" key="4">
    <source>
        <dbReference type="SAM" id="MobiDB-lite"/>
    </source>
</evidence>
<evidence type="ECO:0000305" key="5"/>
<evidence type="ECO:0007829" key="6">
    <source>
        <dbReference type="PDB" id="7S13"/>
    </source>
</evidence>
<comment type="function">
    <text evidence="1">May be involved in adhesive interactions of activated T and NK cells during the late phase of the immune response. Promotes NK cell-target adhesion by interacting with PVR present on target cells. May function at a time after T and NK cells have penetrated the endothelium using integrins and selectins, when they are actively engaging diseased cells and moving within areas of inflammation (By similarity).</text>
</comment>
<comment type="subunit">
    <text evidence="1">Homodimer; disulfide-linked. Interacts with PVR (By similarity).</text>
</comment>
<comment type="subcellular location">
    <subcellularLocation>
        <location evidence="1">Membrane</location>
        <topology evidence="1">Single-pass type I membrane protein</topology>
    </subcellularLocation>
</comment>
<name>TACT_MOUSE</name>
<reference key="1">
    <citation type="submission" date="2001-03" db="EMBL/GenBank/DDBJ databases">
        <title>Mouse homolog of CD96/Tactile.</title>
        <authorList>
            <person name="Saito H."/>
        </authorList>
    </citation>
    <scope>NUCLEOTIDE SEQUENCE [MRNA]</scope>
    <source>
        <strain>BALB/cJ</strain>
    </source>
</reference>
<reference key="2">
    <citation type="journal article" date="2005" name="Science">
        <title>The transcriptional landscape of the mammalian genome.</title>
        <authorList>
            <person name="Carninci P."/>
            <person name="Kasukawa T."/>
            <person name="Katayama S."/>
            <person name="Gough J."/>
            <person name="Frith M.C."/>
            <person name="Maeda N."/>
            <person name="Oyama R."/>
            <person name="Ravasi T."/>
            <person name="Lenhard B."/>
            <person name="Wells C."/>
            <person name="Kodzius R."/>
            <person name="Shimokawa K."/>
            <person name="Bajic V.B."/>
            <person name="Brenner S.E."/>
            <person name="Batalov S."/>
            <person name="Forrest A.R."/>
            <person name="Zavolan M."/>
            <person name="Davis M.J."/>
            <person name="Wilming L.G."/>
            <person name="Aidinis V."/>
            <person name="Allen J.E."/>
            <person name="Ambesi-Impiombato A."/>
            <person name="Apweiler R."/>
            <person name="Aturaliya R.N."/>
            <person name="Bailey T.L."/>
            <person name="Bansal M."/>
            <person name="Baxter L."/>
            <person name="Beisel K.W."/>
            <person name="Bersano T."/>
            <person name="Bono H."/>
            <person name="Chalk A.M."/>
            <person name="Chiu K.P."/>
            <person name="Choudhary V."/>
            <person name="Christoffels A."/>
            <person name="Clutterbuck D.R."/>
            <person name="Crowe M.L."/>
            <person name="Dalla E."/>
            <person name="Dalrymple B.P."/>
            <person name="de Bono B."/>
            <person name="Della Gatta G."/>
            <person name="di Bernardo D."/>
            <person name="Down T."/>
            <person name="Engstrom P."/>
            <person name="Fagiolini M."/>
            <person name="Faulkner G."/>
            <person name="Fletcher C.F."/>
            <person name="Fukushima T."/>
            <person name="Furuno M."/>
            <person name="Futaki S."/>
            <person name="Gariboldi M."/>
            <person name="Georgii-Hemming P."/>
            <person name="Gingeras T.R."/>
            <person name="Gojobori T."/>
            <person name="Green R.E."/>
            <person name="Gustincich S."/>
            <person name="Harbers M."/>
            <person name="Hayashi Y."/>
            <person name="Hensch T.K."/>
            <person name="Hirokawa N."/>
            <person name="Hill D."/>
            <person name="Huminiecki L."/>
            <person name="Iacono M."/>
            <person name="Ikeo K."/>
            <person name="Iwama A."/>
            <person name="Ishikawa T."/>
            <person name="Jakt M."/>
            <person name="Kanapin A."/>
            <person name="Katoh M."/>
            <person name="Kawasawa Y."/>
            <person name="Kelso J."/>
            <person name="Kitamura H."/>
            <person name="Kitano H."/>
            <person name="Kollias G."/>
            <person name="Krishnan S.P."/>
            <person name="Kruger A."/>
            <person name="Kummerfeld S.K."/>
            <person name="Kurochkin I.V."/>
            <person name="Lareau L.F."/>
            <person name="Lazarevic D."/>
            <person name="Lipovich L."/>
            <person name="Liu J."/>
            <person name="Liuni S."/>
            <person name="McWilliam S."/>
            <person name="Madan Babu M."/>
            <person name="Madera M."/>
            <person name="Marchionni L."/>
            <person name="Matsuda H."/>
            <person name="Matsuzawa S."/>
            <person name="Miki H."/>
            <person name="Mignone F."/>
            <person name="Miyake S."/>
            <person name="Morris K."/>
            <person name="Mottagui-Tabar S."/>
            <person name="Mulder N."/>
            <person name="Nakano N."/>
            <person name="Nakauchi H."/>
            <person name="Ng P."/>
            <person name="Nilsson R."/>
            <person name="Nishiguchi S."/>
            <person name="Nishikawa S."/>
            <person name="Nori F."/>
            <person name="Ohara O."/>
            <person name="Okazaki Y."/>
            <person name="Orlando V."/>
            <person name="Pang K.C."/>
            <person name="Pavan W.J."/>
            <person name="Pavesi G."/>
            <person name="Pesole G."/>
            <person name="Petrovsky N."/>
            <person name="Piazza S."/>
            <person name="Reed J."/>
            <person name="Reid J.F."/>
            <person name="Ring B.Z."/>
            <person name="Ringwald M."/>
            <person name="Rost B."/>
            <person name="Ruan Y."/>
            <person name="Salzberg S.L."/>
            <person name="Sandelin A."/>
            <person name="Schneider C."/>
            <person name="Schoenbach C."/>
            <person name="Sekiguchi K."/>
            <person name="Semple C.A."/>
            <person name="Seno S."/>
            <person name="Sessa L."/>
            <person name="Sheng Y."/>
            <person name="Shibata Y."/>
            <person name="Shimada H."/>
            <person name="Shimada K."/>
            <person name="Silva D."/>
            <person name="Sinclair B."/>
            <person name="Sperling S."/>
            <person name="Stupka E."/>
            <person name="Sugiura K."/>
            <person name="Sultana R."/>
            <person name="Takenaka Y."/>
            <person name="Taki K."/>
            <person name="Tammoja K."/>
            <person name="Tan S.L."/>
            <person name="Tang S."/>
            <person name="Taylor M.S."/>
            <person name="Tegner J."/>
            <person name="Teichmann S.A."/>
            <person name="Ueda H.R."/>
            <person name="van Nimwegen E."/>
            <person name="Verardo R."/>
            <person name="Wei C.L."/>
            <person name="Yagi K."/>
            <person name="Yamanishi H."/>
            <person name="Zabarovsky E."/>
            <person name="Zhu S."/>
            <person name="Zimmer A."/>
            <person name="Hide W."/>
            <person name="Bult C."/>
            <person name="Grimmond S.M."/>
            <person name="Teasdale R.D."/>
            <person name="Liu E.T."/>
            <person name="Brusic V."/>
            <person name="Quackenbush J."/>
            <person name="Wahlestedt C."/>
            <person name="Mattick J.S."/>
            <person name="Hume D.A."/>
            <person name="Kai C."/>
            <person name="Sasaki D."/>
            <person name="Tomaru Y."/>
            <person name="Fukuda S."/>
            <person name="Kanamori-Katayama M."/>
            <person name="Suzuki M."/>
            <person name="Aoki J."/>
            <person name="Arakawa T."/>
            <person name="Iida J."/>
            <person name="Imamura K."/>
            <person name="Itoh M."/>
            <person name="Kato T."/>
            <person name="Kawaji H."/>
            <person name="Kawagashira N."/>
            <person name="Kawashima T."/>
            <person name="Kojima M."/>
            <person name="Kondo S."/>
            <person name="Konno H."/>
            <person name="Nakano K."/>
            <person name="Ninomiya N."/>
            <person name="Nishio T."/>
            <person name="Okada M."/>
            <person name="Plessy C."/>
            <person name="Shibata K."/>
            <person name="Shiraki T."/>
            <person name="Suzuki S."/>
            <person name="Tagami M."/>
            <person name="Waki K."/>
            <person name="Watahiki A."/>
            <person name="Okamura-Oho Y."/>
            <person name="Suzuki H."/>
            <person name="Kawai J."/>
            <person name="Hayashizaki Y."/>
        </authorList>
    </citation>
    <scope>NUCLEOTIDE SEQUENCE [LARGE SCALE MRNA]</scope>
    <source>
        <strain>C57BL/6J</strain>
        <strain>NOD</strain>
        <tissue>Spleen</tissue>
        <tissue>Thymus</tissue>
    </source>
</reference>
<reference key="3">
    <citation type="journal article" date="2004" name="Genome Res.">
        <title>The status, quality, and expansion of the NIH full-length cDNA project: the Mammalian Gene Collection (MGC).</title>
        <authorList>
            <consortium name="The MGC Project Team"/>
        </authorList>
    </citation>
    <scope>NUCLEOTIDE SEQUENCE [LARGE SCALE MRNA]</scope>
    <source>
        <strain>C57BL/6NCr</strain>
    </source>
</reference>
<gene>
    <name type="primary">Cd96</name>
</gene>
<protein>
    <recommendedName>
        <fullName>T-cell surface protein tactile</fullName>
    </recommendedName>
    <alternativeName>
        <fullName>Cell surface antigen CD96</fullName>
    </alternativeName>
    <alternativeName>
        <fullName>T cell-activated increased late expression protein</fullName>
    </alternativeName>
    <cdAntigenName>CD96</cdAntigenName>
</protein>
<keyword id="KW-0002">3D-structure</keyword>
<keyword id="KW-0130">Cell adhesion</keyword>
<keyword id="KW-1015">Disulfide bond</keyword>
<keyword id="KW-0325">Glycoprotein</keyword>
<keyword id="KW-0393">Immunoglobulin domain</keyword>
<keyword id="KW-0472">Membrane</keyword>
<keyword id="KW-1185">Reference proteome</keyword>
<keyword id="KW-0677">Repeat</keyword>
<keyword id="KW-0732">Signal</keyword>
<keyword id="KW-0812">Transmembrane</keyword>
<keyword id="KW-1133">Transmembrane helix</keyword>
<sequence length="602" mass="67133">MGRKWTYCVVYTIIQIQFFRGVWEELFNVGDDVYALPGSDINLTCQTKEKNFLVQMQWSKVTDKNDMIALYHPQYGLYCGQEHACESQVAATETEKGVTNWTLYLRNISSALGGKYECIFTLYPEGIKTTVYNLIVEPYTQDEHNYTIEIETNRTLEIPCFQNTSSEIPPRFTFSWLVEKDGVEEVLFTHHHHVNNSTSFKGRIRLGGDYRLHLSPVQIQDDGRTFSCHLTVNPLKAWKMSTTVKVFAKPEILMTVENSTMDVLGERVFTCLLKNVFPKANITWFIDGRFLQGNEEGIYITNEEKNCSSGFWELKSVLTRMHSGPSQSNNMTAWCMALSPGPRNKMWNTSSQPITVSFDSVIAPTKHLPTVTGSTLGTQPFSDAGVSPTGYLATPSVTIVDENGLTPDATPQTSNSSMTTKDGNYLEASSGTDAKNSSRAAASSKSGSWPFPFTSPPEWHSLPGTSTGPQEPDSPVSWIPSEVHTSAPLDASLAPHDTIISTTTEFPNVLTTANGTTKIDHGPITSIIVNQPSDGMSWPVLVAALLFFCTLLFGLGVRKWYRYQNEIMERPPPFKPPPPPIKYTYIQEPIGCDLCCHEMEVL</sequence>
<dbReference type="EMBL" id="AY029156">
    <property type="protein sequence ID" value="AAK31788.1"/>
    <property type="molecule type" value="mRNA"/>
</dbReference>
<dbReference type="EMBL" id="AK040539">
    <property type="protein sequence ID" value="BAC30620.1"/>
    <property type="molecule type" value="mRNA"/>
</dbReference>
<dbReference type="EMBL" id="AK156470">
    <property type="protein sequence ID" value="BAE33723.1"/>
    <property type="molecule type" value="mRNA"/>
</dbReference>
<dbReference type="EMBL" id="BC052865">
    <property type="protein sequence ID" value="AAH52865.1"/>
    <property type="molecule type" value="mRNA"/>
</dbReference>
<dbReference type="CCDS" id="CCDS37348.1"/>
<dbReference type="RefSeq" id="NP_115854.2">
    <property type="nucleotide sequence ID" value="NM_032465.2"/>
</dbReference>
<dbReference type="PDB" id="7S11">
    <property type="method" value="X-ray"/>
    <property type="resolution" value="2.58 A"/>
    <property type="chains" value="C/D/E/F=24-138"/>
</dbReference>
<dbReference type="PDB" id="7S13">
    <property type="method" value="X-ray"/>
    <property type="resolution" value="2.12 A"/>
    <property type="chains" value="C/D=21-138"/>
</dbReference>
<dbReference type="PDBsum" id="7S11"/>
<dbReference type="PDBsum" id="7S13"/>
<dbReference type="SMR" id="Q3U0X8"/>
<dbReference type="FunCoup" id="Q3U0X8">
    <property type="interactions" value="503"/>
</dbReference>
<dbReference type="STRING" id="10090.ENSMUSP00000023336"/>
<dbReference type="GlyCosmos" id="Q3U0X8">
    <property type="glycosylation" value="16 sites, No reported glycans"/>
</dbReference>
<dbReference type="GlyGen" id="Q3U0X8">
    <property type="glycosylation" value="17 sites"/>
</dbReference>
<dbReference type="iPTMnet" id="Q3U0X8"/>
<dbReference type="PhosphoSitePlus" id="Q3U0X8"/>
<dbReference type="PaxDb" id="10090-ENSMUSP00000023336"/>
<dbReference type="ProteomicsDB" id="259341"/>
<dbReference type="Antibodypedia" id="32434">
    <property type="antibodies" value="353 antibodies from 35 providers"/>
</dbReference>
<dbReference type="DNASU" id="84544"/>
<dbReference type="Ensembl" id="ENSMUST00000023336.10">
    <property type="protein sequence ID" value="ENSMUSP00000023336.10"/>
    <property type="gene ID" value="ENSMUSG00000022657.10"/>
</dbReference>
<dbReference type="GeneID" id="84544"/>
<dbReference type="KEGG" id="mmu:84544"/>
<dbReference type="UCSC" id="uc007zjf.2">
    <property type="organism name" value="mouse"/>
</dbReference>
<dbReference type="AGR" id="MGI:1934368"/>
<dbReference type="CTD" id="10225"/>
<dbReference type="MGI" id="MGI:1934368">
    <property type="gene designation" value="Cd96"/>
</dbReference>
<dbReference type="VEuPathDB" id="HostDB:ENSMUSG00000022657"/>
<dbReference type="eggNOG" id="ENOG502QWNP">
    <property type="taxonomic scope" value="Eukaryota"/>
</dbReference>
<dbReference type="GeneTree" id="ENSGT00390000003446"/>
<dbReference type="HOGENOM" id="CLU_033543_1_0_1"/>
<dbReference type="InParanoid" id="Q3U0X8"/>
<dbReference type="OMA" id="QHGFYCA"/>
<dbReference type="OrthoDB" id="9904226at2759"/>
<dbReference type="PhylomeDB" id="Q3U0X8"/>
<dbReference type="TreeFam" id="TF336934"/>
<dbReference type="Reactome" id="R-MMU-198933">
    <property type="pathway name" value="Immunoregulatory interactions between a Lymphoid and a non-Lymphoid cell"/>
</dbReference>
<dbReference type="BioGRID-ORCS" id="84544">
    <property type="hits" value="2 hits in 77 CRISPR screens"/>
</dbReference>
<dbReference type="ChiTaRS" id="Cd96">
    <property type="organism name" value="mouse"/>
</dbReference>
<dbReference type="PRO" id="PR:Q3U0X8"/>
<dbReference type="Proteomes" id="UP000000589">
    <property type="component" value="Chromosome 16"/>
</dbReference>
<dbReference type="RNAct" id="Q3U0X8">
    <property type="molecule type" value="protein"/>
</dbReference>
<dbReference type="Bgee" id="ENSMUSG00000022657">
    <property type="expression patterns" value="Expressed in thymus and 46 other cell types or tissues"/>
</dbReference>
<dbReference type="GO" id="GO:0005737">
    <property type="term" value="C:cytoplasm"/>
    <property type="evidence" value="ECO:0000266"/>
    <property type="project" value="MGI"/>
</dbReference>
<dbReference type="GO" id="GO:0016020">
    <property type="term" value="C:membrane"/>
    <property type="evidence" value="ECO:0007669"/>
    <property type="project" value="UniProtKB-SubCell"/>
</dbReference>
<dbReference type="GO" id="GO:0007160">
    <property type="term" value="P:cell-matrix adhesion"/>
    <property type="evidence" value="ECO:0000266"/>
    <property type="project" value="MGI"/>
</dbReference>
<dbReference type="GO" id="GO:0002728">
    <property type="term" value="P:negative regulation of natural killer cell cytokine production"/>
    <property type="evidence" value="ECO:0000315"/>
    <property type="project" value="MGI"/>
</dbReference>
<dbReference type="GO" id="GO:0032689">
    <property type="term" value="P:negative regulation of type II interferon production"/>
    <property type="evidence" value="ECO:0000315"/>
    <property type="project" value="MGI"/>
</dbReference>
<dbReference type="GO" id="GO:0032496">
    <property type="term" value="P:response to lipopolysaccharide"/>
    <property type="evidence" value="ECO:0000315"/>
    <property type="project" value="MGI"/>
</dbReference>
<dbReference type="FunFam" id="2.60.40.10:FF:002208">
    <property type="entry name" value="CD96 isoform 3"/>
    <property type="match status" value="1"/>
</dbReference>
<dbReference type="Gene3D" id="2.60.40.10">
    <property type="entry name" value="Immunoglobulins"/>
    <property type="match status" value="3"/>
</dbReference>
<dbReference type="InterPro" id="IPR042381">
    <property type="entry name" value="CD96"/>
</dbReference>
<dbReference type="InterPro" id="IPR007110">
    <property type="entry name" value="Ig-like_dom"/>
</dbReference>
<dbReference type="InterPro" id="IPR036179">
    <property type="entry name" value="Ig-like_dom_sf"/>
</dbReference>
<dbReference type="InterPro" id="IPR013783">
    <property type="entry name" value="Ig-like_fold"/>
</dbReference>
<dbReference type="InterPro" id="IPR003599">
    <property type="entry name" value="Ig_sub"/>
</dbReference>
<dbReference type="PANTHER" id="PTHR15317">
    <property type="entry name" value="T-CELL SURFACE PROTEIN TACTILE"/>
    <property type="match status" value="1"/>
</dbReference>
<dbReference type="PANTHER" id="PTHR15317:SF1">
    <property type="entry name" value="T-CELL SURFACE PROTEIN TACTILE"/>
    <property type="match status" value="1"/>
</dbReference>
<dbReference type="SMART" id="SM00409">
    <property type="entry name" value="IG"/>
    <property type="match status" value="2"/>
</dbReference>
<dbReference type="SUPFAM" id="SSF48726">
    <property type="entry name" value="Immunoglobulin"/>
    <property type="match status" value="3"/>
</dbReference>
<dbReference type="PROSITE" id="PS50835">
    <property type="entry name" value="IG_LIKE"/>
    <property type="match status" value="2"/>
</dbReference>
<accession>Q3U0X8</accession>
<accession>Q7TMW0</accession>
<accession>Q8C9U6</accession>
<accession>Q99M67</accession>
<organism>
    <name type="scientific">Mus musculus</name>
    <name type="common">Mouse</name>
    <dbReference type="NCBI Taxonomy" id="10090"/>
    <lineage>
        <taxon>Eukaryota</taxon>
        <taxon>Metazoa</taxon>
        <taxon>Chordata</taxon>
        <taxon>Craniata</taxon>
        <taxon>Vertebrata</taxon>
        <taxon>Euteleostomi</taxon>
        <taxon>Mammalia</taxon>
        <taxon>Eutheria</taxon>
        <taxon>Euarchontoglires</taxon>
        <taxon>Glires</taxon>
        <taxon>Rodentia</taxon>
        <taxon>Myomorpha</taxon>
        <taxon>Muroidea</taxon>
        <taxon>Muridae</taxon>
        <taxon>Murinae</taxon>
        <taxon>Mus</taxon>
        <taxon>Mus</taxon>
    </lineage>
</organism>